<evidence type="ECO:0000255" key="1">
    <source>
        <dbReference type="HAMAP-Rule" id="MF_00258"/>
    </source>
</evidence>
<keyword id="KW-0133">Cell shape</keyword>
<keyword id="KW-0961">Cell wall biogenesis/degradation</keyword>
<keyword id="KW-0413">Isomerase</keyword>
<keyword id="KW-0573">Peptidoglycan synthesis</keyword>
<reference key="1">
    <citation type="journal article" date="2009" name="J. Bacteriol.">
        <title>Genomic sequencing reveals regulatory mutations and recombinational events in the widely used MC4100 lineage of Escherichia coli K-12.</title>
        <authorList>
            <person name="Ferenci T."/>
            <person name="Zhou Z."/>
            <person name="Betteridge T."/>
            <person name="Ren Y."/>
            <person name="Liu Y."/>
            <person name="Feng L."/>
            <person name="Reeves P.R."/>
            <person name="Wang L."/>
        </authorList>
    </citation>
    <scope>NUCLEOTIDE SEQUENCE [LARGE SCALE GENOMIC DNA]</scope>
    <source>
        <strain>K12 / MC4100 / BW2952</strain>
    </source>
</reference>
<proteinExistence type="inferred from homology"/>
<gene>
    <name evidence="1" type="primary">murI</name>
    <name type="ordered locus">BWG_3635</name>
</gene>
<feature type="chain" id="PRO_1000204626" description="Glutamate racemase">
    <location>
        <begin position="1"/>
        <end position="285"/>
    </location>
</feature>
<feature type="active site" description="Proton donor/acceptor" evidence="1">
    <location>
        <position position="92"/>
    </location>
</feature>
<feature type="active site" description="Proton donor/acceptor" evidence="1">
    <location>
        <position position="204"/>
    </location>
</feature>
<feature type="binding site" evidence="1">
    <location>
        <begin position="28"/>
        <end position="29"/>
    </location>
    <ligand>
        <name>substrate</name>
    </ligand>
</feature>
<feature type="binding site" evidence="1">
    <location>
        <begin position="60"/>
        <end position="61"/>
    </location>
    <ligand>
        <name>substrate</name>
    </ligand>
</feature>
<feature type="binding site" evidence="1">
    <location>
        <begin position="93"/>
        <end position="94"/>
    </location>
    <ligand>
        <name>substrate</name>
    </ligand>
</feature>
<feature type="binding site" evidence="1">
    <location>
        <begin position="205"/>
        <end position="206"/>
    </location>
    <ligand>
        <name>substrate</name>
    </ligand>
</feature>
<dbReference type="EC" id="5.1.1.3" evidence="1"/>
<dbReference type="EMBL" id="CP001396">
    <property type="protein sequence ID" value="ACR63330.1"/>
    <property type="molecule type" value="Genomic_DNA"/>
</dbReference>
<dbReference type="RefSeq" id="WP_000201820.1">
    <property type="nucleotide sequence ID" value="NC_012759.1"/>
</dbReference>
<dbReference type="SMR" id="C5A0R6"/>
<dbReference type="KEGG" id="ebw:BWG_3635"/>
<dbReference type="HOGENOM" id="CLU_052344_2_0_6"/>
<dbReference type="UniPathway" id="UPA00219"/>
<dbReference type="GO" id="GO:0008881">
    <property type="term" value="F:glutamate racemase activity"/>
    <property type="evidence" value="ECO:0007669"/>
    <property type="project" value="UniProtKB-UniRule"/>
</dbReference>
<dbReference type="GO" id="GO:0071555">
    <property type="term" value="P:cell wall organization"/>
    <property type="evidence" value="ECO:0007669"/>
    <property type="project" value="UniProtKB-KW"/>
</dbReference>
<dbReference type="GO" id="GO:0009252">
    <property type="term" value="P:peptidoglycan biosynthetic process"/>
    <property type="evidence" value="ECO:0007669"/>
    <property type="project" value="UniProtKB-UniRule"/>
</dbReference>
<dbReference type="GO" id="GO:0008360">
    <property type="term" value="P:regulation of cell shape"/>
    <property type="evidence" value="ECO:0007669"/>
    <property type="project" value="UniProtKB-KW"/>
</dbReference>
<dbReference type="FunFam" id="3.40.50.1860:FF:000002">
    <property type="entry name" value="Glutamate racemase"/>
    <property type="match status" value="1"/>
</dbReference>
<dbReference type="Gene3D" id="3.40.50.1860">
    <property type="match status" value="2"/>
</dbReference>
<dbReference type="HAMAP" id="MF_00258">
    <property type="entry name" value="Glu_racemase"/>
    <property type="match status" value="1"/>
</dbReference>
<dbReference type="InterPro" id="IPR015942">
    <property type="entry name" value="Asp/Glu/hydantoin_racemase"/>
</dbReference>
<dbReference type="InterPro" id="IPR001920">
    <property type="entry name" value="Asp/Glu_race"/>
</dbReference>
<dbReference type="InterPro" id="IPR018187">
    <property type="entry name" value="Asp/Glu_racemase_AS_1"/>
</dbReference>
<dbReference type="InterPro" id="IPR033134">
    <property type="entry name" value="Asp/Glu_racemase_AS_2"/>
</dbReference>
<dbReference type="InterPro" id="IPR004391">
    <property type="entry name" value="Glu_race"/>
</dbReference>
<dbReference type="NCBIfam" id="TIGR00067">
    <property type="entry name" value="glut_race"/>
    <property type="match status" value="1"/>
</dbReference>
<dbReference type="NCBIfam" id="NF002034">
    <property type="entry name" value="PRK00865.1-1"/>
    <property type="match status" value="1"/>
</dbReference>
<dbReference type="PANTHER" id="PTHR21198">
    <property type="entry name" value="GLUTAMATE RACEMASE"/>
    <property type="match status" value="1"/>
</dbReference>
<dbReference type="PANTHER" id="PTHR21198:SF2">
    <property type="entry name" value="GLUTAMATE RACEMASE"/>
    <property type="match status" value="1"/>
</dbReference>
<dbReference type="Pfam" id="PF01177">
    <property type="entry name" value="Asp_Glu_race"/>
    <property type="match status" value="1"/>
</dbReference>
<dbReference type="SUPFAM" id="SSF53681">
    <property type="entry name" value="Aspartate/glutamate racemase"/>
    <property type="match status" value="2"/>
</dbReference>
<dbReference type="PROSITE" id="PS00923">
    <property type="entry name" value="ASP_GLU_RACEMASE_1"/>
    <property type="match status" value="1"/>
</dbReference>
<dbReference type="PROSITE" id="PS00924">
    <property type="entry name" value="ASP_GLU_RACEMASE_2"/>
    <property type="match status" value="1"/>
</dbReference>
<name>MURI_ECOBW</name>
<comment type="function">
    <text evidence="1">Provides the (R)-glutamate required for cell wall biosynthesis.</text>
</comment>
<comment type="catalytic activity">
    <reaction evidence="1">
        <text>L-glutamate = D-glutamate</text>
        <dbReference type="Rhea" id="RHEA:12813"/>
        <dbReference type="ChEBI" id="CHEBI:29985"/>
        <dbReference type="ChEBI" id="CHEBI:29986"/>
        <dbReference type="EC" id="5.1.1.3"/>
    </reaction>
</comment>
<comment type="pathway">
    <text evidence="1">Cell wall biogenesis; peptidoglycan biosynthesis.</text>
</comment>
<comment type="similarity">
    <text evidence="1">Belongs to the aspartate/glutamate racemases family.</text>
</comment>
<protein>
    <recommendedName>
        <fullName evidence="1">Glutamate racemase</fullName>
        <ecNumber evidence="1">5.1.1.3</ecNumber>
    </recommendedName>
</protein>
<organism>
    <name type="scientific">Escherichia coli (strain K12 / MC4100 / BW2952)</name>
    <dbReference type="NCBI Taxonomy" id="595496"/>
    <lineage>
        <taxon>Bacteria</taxon>
        <taxon>Pseudomonadati</taxon>
        <taxon>Pseudomonadota</taxon>
        <taxon>Gammaproteobacteria</taxon>
        <taxon>Enterobacterales</taxon>
        <taxon>Enterobacteriaceae</taxon>
        <taxon>Escherichia</taxon>
    </lineage>
</organism>
<sequence length="285" mass="31002">MATKLQDGNTPCLAATPSEPRPTVLVFDSGVGGLSVYDEIRHLLPDLHYIYAFDNVAFPYGEKSEAFIVERVVAIVTAVQERYPLALAVVACNTASTVSLPALREKFDFPVVGVVPAIKPAARLTANGIVGLLATRGTVKRSYTHELIARFANECQIEMLGSAEMVELAEAKLHGEDVSLDALKRILRPWLRMKEPPDTVVLGCTHFPLLQEELLQVLPEGTRLVDSGAAIARRTAWLLEHEAPDAKSADANIAFCMAMTPGAEQLLPVLQRYGFETLEKLAVLG</sequence>
<accession>C5A0R6</accession>